<proteinExistence type="inferred from homology"/>
<feature type="chain" id="PRO_1000077928" description="UvrABC system protein B">
    <location>
        <begin position="1"/>
        <end position="663"/>
    </location>
</feature>
<feature type="domain" description="Helicase ATP-binding" evidence="1">
    <location>
        <begin position="31"/>
        <end position="271"/>
    </location>
</feature>
<feature type="domain" description="Helicase C-terminal" evidence="1">
    <location>
        <begin position="435"/>
        <end position="601"/>
    </location>
</feature>
<feature type="domain" description="UVR" evidence="1">
    <location>
        <begin position="627"/>
        <end position="662"/>
    </location>
</feature>
<feature type="region of interest" description="Disordered" evidence="2">
    <location>
        <begin position="1"/>
        <end position="23"/>
    </location>
</feature>
<feature type="short sequence motif" description="Beta-hairpin">
    <location>
        <begin position="97"/>
        <end position="120"/>
    </location>
</feature>
<feature type="compositionally biased region" description="Basic and acidic residues" evidence="2">
    <location>
        <begin position="1"/>
        <end position="10"/>
    </location>
</feature>
<feature type="binding site" evidence="1">
    <location>
        <begin position="44"/>
        <end position="51"/>
    </location>
    <ligand>
        <name>ATP</name>
        <dbReference type="ChEBI" id="CHEBI:30616"/>
    </ligand>
</feature>
<evidence type="ECO:0000255" key="1">
    <source>
        <dbReference type="HAMAP-Rule" id="MF_00204"/>
    </source>
</evidence>
<evidence type="ECO:0000256" key="2">
    <source>
        <dbReference type="SAM" id="MobiDB-lite"/>
    </source>
</evidence>
<comment type="function">
    <text evidence="1">The UvrABC repair system catalyzes the recognition and processing of DNA lesions. A damage recognition complex composed of 2 UvrA and 2 UvrB subunits scans DNA for abnormalities. Upon binding of the UvrA(2)B(2) complex to a putative damaged site, the DNA wraps around one UvrB monomer. DNA wrap is dependent on ATP binding by UvrB and probably causes local melting of the DNA helix, facilitating insertion of UvrB beta-hairpin between the DNA strands. Then UvrB probes one DNA strand for the presence of a lesion. If a lesion is found the UvrA subunits dissociate and the UvrB-DNA preincision complex is formed. This complex is subsequently bound by UvrC and the second UvrB is released. If no lesion is found, the DNA wraps around the other UvrB subunit that will check the other stand for damage.</text>
</comment>
<comment type="subunit">
    <text evidence="1">Forms a heterotetramer with UvrA during the search for lesions. Interacts with UvrC in an incision complex.</text>
</comment>
<comment type="subcellular location">
    <subcellularLocation>
        <location evidence="1">Cytoplasm</location>
    </subcellularLocation>
</comment>
<comment type="domain">
    <text evidence="1">The beta-hairpin motif is involved in DNA binding.</text>
</comment>
<comment type="similarity">
    <text evidence="1">Belongs to the UvrB family.</text>
</comment>
<dbReference type="EMBL" id="CP000260">
    <property type="protein sequence ID" value="ABF34196.1"/>
    <property type="molecule type" value="Genomic_DNA"/>
</dbReference>
<dbReference type="SMR" id="Q1JGE8"/>
<dbReference type="KEGG" id="sph:MGAS10270_Spy1131"/>
<dbReference type="HOGENOM" id="CLU_009621_2_1_9"/>
<dbReference type="Proteomes" id="UP000002436">
    <property type="component" value="Chromosome"/>
</dbReference>
<dbReference type="GO" id="GO:0005737">
    <property type="term" value="C:cytoplasm"/>
    <property type="evidence" value="ECO:0007669"/>
    <property type="project" value="UniProtKB-SubCell"/>
</dbReference>
<dbReference type="GO" id="GO:0009380">
    <property type="term" value="C:excinuclease repair complex"/>
    <property type="evidence" value="ECO:0007669"/>
    <property type="project" value="InterPro"/>
</dbReference>
<dbReference type="GO" id="GO:0005524">
    <property type="term" value="F:ATP binding"/>
    <property type="evidence" value="ECO:0007669"/>
    <property type="project" value="UniProtKB-UniRule"/>
</dbReference>
<dbReference type="GO" id="GO:0016887">
    <property type="term" value="F:ATP hydrolysis activity"/>
    <property type="evidence" value="ECO:0007669"/>
    <property type="project" value="InterPro"/>
</dbReference>
<dbReference type="GO" id="GO:0003677">
    <property type="term" value="F:DNA binding"/>
    <property type="evidence" value="ECO:0007669"/>
    <property type="project" value="UniProtKB-UniRule"/>
</dbReference>
<dbReference type="GO" id="GO:0009381">
    <property type="term" value="F:excinuclease ABC activity"/>
    <property type="evidence" value="ECO:0007669"/>
    <property type="project" value="UniProtKB-UniRule"/>
</dbReference>
<dbReference type="GO" id="GO:0004386">
    <property type="term" value="F:helicase activity"/>
    <property type="evidence" value="ECO:0007669"/>
    <property type="project" value="UniProtKB-KW"/>
</dbReference>
<dbReference type="GO" id="GO:0006289">
    <property type="term" value="P:nucleotide-excision repair"/>
    <property type="evidence" value="ECO:0007669"/>
    <property type="project" value="UniProtKB-UniRule"/>
</dbReference>
<dbReference type="GO" id="GO:0009432">
    <property type="term" value="P:SOS response"/>
    <property type="evidence" value="ECO:0007669"/>
    <property type="project" value="UniProtKB-UniRule"/>
</dbReference>
<dbReference type="CDD" id="cd17916">
    <property type="entry name" value="DEXHc_UvrB"/>
    <property type="match status" value="1"/>
</dbReference>
<dbReference type="CDD" id="cd18790">
    <property type="entry name" value="SF2_C_UvrB"/>
    <property type="match status" value="1"/>
</dbReference>
<dbReference type="Gene3D" id="3.40.50.300">
    <property type="entry name" value="P-loop containing nucleotide triphosphate hydrolases"/>
    <property type="match status" value="3"/>
</dbReference>
<dbReference type="Gene3D" id="4.10.860.10">
    <property type="entry name" value="UVR domain"/>
    <property type="match status" value="1"/>
</dbReference>
<dbReference type="HAMAP" id="MF_00204">
    <property type="entry name" value="UvrB"/>
    <property type="match status" value="1"/>
</dbReference>
<dbReference type="InterPro" id="IPR006935">
    <property type="entry name" value="Helicase/UvrB_N"/>
</dbReference>
<dbReference type="InterPro" id="IPR014001">
    <property type="entry name" value="Helicase_ATP-bd"/>
</dbReference>
<dbReference type="InterPro" id="IPR001650">
    <property type="entry name" value="Helicase_C-like"/>
</dbReference>
<dbReference type="InterPro" id="IPR027417">
    <property type="entry name" value="P-loop_NTPase"/>
</dbReference>
<dbReference type="InterPro" id="IPR001943">
    <property type="entry name" value="UVR_dom"/>
</dbReference>
<dbReference type="InterPro" id="IPR036876">
    <property type="entry name" value="UVR_dom_sf"/>
</dbReference>
<dbReference type="InterPro" id="IPR004807">
    <property type="entry name" value="UvrB"/>
</dbReference>
<dbReference type="InterPro" id="IPR041471">
    <property type="entry name" value="UvrB_inter"/>
</dbReference>
<dbReference type="InterPro" id="IPR024759">
    <property type="entry name" value="UvrB_YAD/RRR_dom"/>
</dbReference>
<dbReference type="NCBIfam" id="NF003673">
    <property type="entry name" value="PRK05298.1"/>
    <property type="match status" value="1"/>
</dbReference>
<dbReference type="NCBIfam" id="TIGR00631">
    <property type="entry name" value="uvrb"/>
    <property type="match status" value="1"/>
</dbReference>
<dbReference type="PANTHER" id="PTHR24029">
    <property type="entry name" value="UVRABC SYSTEM PROTEIN B"/>
    <property type="match status" value="1"/>
</dbReference>
<dbReference type="PANTHER" id="PTHR24029:SF0">
    <property type="entry name" value="UVRABC SYSTEM PROTEIN B"/>
    <property type="match status" value="1"/>
</dbReference>
<dbReference type="Pfam" id="PF00271">
    <property type="entry name" value="Helicase_C"/>
    <property type="match status" value="1"/>
</dbReference>
<dbReference type="Pfam" id="PF04851">
    <property type="entry name" value="ResIII"/>
    <property type="match status" value="1"/>
</dbReference>
<dbReference type="Pfam" id="PF02151">
    <property type="entry name" value="UVR"/>
    <property type="match status" value="1"/>
</dbReference>
<dbReference type="Pfam" id="PF12344">
    <property type="entry name" value="UvrB"/>
    <property type="match status" value="1"/>
</dbReference>
<dbReference type="Pfam" id="PF17757">
    <property type="entry name" value="UvrB_inter"/>
    <property type="match status" value="1"/>
</dbReference>
<dbReference type="SMART" id="SM00487">
    <property type="entry name" value="DEXDc"/>
    <property type="match status" value="1"/>
</dbReference>
<dbReference type="SMART" id="SM00490">
    <property type="entry name" value="HELICc"/>
    <property type="match status" value="1"/>
</dbReference>
<dbReference type="SUPFAM" id="SSF46600">
    <property type="entry name" value="C-terminal UvrC-binding domain of UvrB"/>
    <property type="match status" value="1"/>
</dbReference>
<dbReference type="SUPFAM" id="SSF52540">
    <property type="entry name" value="P-loop containing nucleoside triphosphate hydrolases"/>
    <property type="match status" value="2"/>
</dbReference>
<dbReference type="PROSITE" id="PS51192">
    <property type="entry name" value="HELICASE_ATP_BIND_1"/>
    <property type="match status" value="1"/>
</dbReference>
<dbReference type="PROSITE" id="PS51194">
    <property type="entry name" value="HELICASE_CTER"/>
    <property type="match status" value="1"/>
</dbReference>
<dbReference type="PROSITE" id="PS50151">
    <property type="entry name" value="UVR"/>
    <property type="match status" value="1"/>
</dbReference>
<organism>
    <name type="scientific">Streptococcus pyogenes serotype M2 (strain MGAS10270)</name>
    <dbReference type="NCBI Taxonomy" id="370552"/>
    <lineage>
        <taxon>Bacteria</taxon>
        <taxon>Bacillati</taxon>
        <taxon>Bacillota</taxon>
        <taxon>Bacilli</taxon>
        <taxon>Lactobacillales</taxon>
        <taxon>Streptococcaceae</taxon>
        <taxon>Streptococcus</taxon>
    </lineage>
</organism>
<reference key="1">
    <citation type="journal article" date="2006" name="Proc. Natl. Acad. Sci. U.S.A.">
        <title>Molecular genetic anatomy of inter- and intraserotype variation in the human bacterial pathogen group A Streptococcus.</title>
        <authorList>
            <person name="Beres S.B."/>
            <person name="Richter E.W."/>
            <person name="Nagiec M.J."/>
            <person name="Sumby P."/>
            <person name="Porcella S.F."/>
            <person name="DeLeo F.R."/>
            <person name="Musser J.M."/>
        </authorList>
    </citation>
    <scope>NUCLEOTIDE SEQUENCE [LARGE SCALE GENOMIC DNA]</scope>
    <source>
        <strain>MGAS10270</strain>
    </source>
</reference>
<name>UVRB_STRPD</name>
<gene>
    <name evidence="1" type="primary">uvrB</name>
    <name type="ordered locus">MGAS10270_Spy1131</name>
</gene>
<sequence>MIDKRDDKPFKLKSKYKPSGDQPQAIESLVDNIEGGEKAQILLGATGTGKTYTMSQVISKVNKPTLVIAHNKTLAGQLYGEFKEFFPDNAVEYFVSYYDYYQPEAYVPSSDTYIEKDSSVNDEIDKLRHSATASLLERNDVIVVASVSCIYGLGSPKEYADSAVSLRPGQEISRDTLLNQLVDIQFERNDIDFQRGCFRVRGDVVEVFPASRDEHAFRVEFFGDEIDRICEIESLTGKTIGEVDHLVLFPATHFVTNDEHMEQSIAKIQAELAEQLQLFESEGKLLEAQRLRQRTEYDIEMLREMGYTSGVENYSRHMDGRSPGEPPYTLLDFFPEDFLIMIDESHMTMGQIKGMYNGDQARKQMLVDYGFRLPSALDNRPLRREEFESHVHQIVYVSATPGEYEMSQTNTIIEQIIRPTGLLDPEIDVRPSMGQMDDLLGEINQRVARDERTFITTLTKKMAEDLTDYLKEMGVKVKYMHSDIKTLERTEIIRDLRLGVFDVLIGINLLREGIDVPEVSLVAILDADKEGFLRNERGLIQTIGRAARNVDGHVIMYADKMTDSMQRAIDETARRREIQIAYNKAHGIVPQTIKKDIRGLISISKTSHNDISKEEMDYESMSRGERKEAINALQKQMQEAAELLDFELAAQMRDLILELKLMD</sequence>
<accession>Q1JGE8</accession>
<keyword id="KW-0067">ATP-binding</keyword>
<keyword id="KW-0963">Cytoplasm</keyword>
<keyword id="KW-0227">DNA damage</keyword>
<keyword id="KW-0228">DNA excision</keyword>
<keyword id="KW-0234">DNA repair</keyword>
<keyword id="KW-0267">Excision nuclease</keyword>
<keyword id="KW-0347">Helicase</keyword>
<keyword id="KW-0378">Hydrolase</keyword>
<keyword id="KW-0547">Nucleotide-binding</keyword>
<keyword id="KW-0742">SOS response</keyword>
<protein>
    <recommendedName>
        <fullName evidence="1">UvrABC system protein B</fullName>
        <shortName evidence="1">Protein UvrB</shortName>
    </recommendedName>
    <alternativeName>
        <fullName evidence="1">Excinuclease ABC subunit B</fullName>
    </alternativeName>
</protein>